<sequence>MPPLLKLALELGPLLVFFFANARGEMLIERFPILGSIGAPIFLATALFMAATVIALAISWSMTRTLPIMPLVSGIVVLVFGALTLWLHNDTFIKMKPTIVNTLFGGILLGGLFFGKSLLGYVFDSAFRLDAEGWRKLTLRWGLFFIFLAIVNEIVWRNFSTDTWVSFKVWGIMPITIVFTLLQMPLIQKHSLTDEENTAS</sequence>
<gene>
    <name evidence="1" type="primary">yciB</name>
    <name type="ordered locus">BR1935</name>
    <name type="ordered locus">BS1330_I1929</name>
</gene>
<keyword id="KW-0997">Cell inner membrane</keyword>
<keyword id="KW-1003">Cell membrane</keyword>
<keyword id="KW-0472">Membrane</keyword>
<keyword id="KW-0812">Transmembrane</keyword>
<keyword id="KW-1133">Transmembrane helix</keyword>
<organism>
    <name type="scientific">Brucella suis biovar 1 (strain 1330)</name>
    <dbReference type="NCBI Taxonomy" id="204722"/>
    <lineage>
        <taxon>Bacteria</taxon>
        <taxon>Pseudomonadati</taxon>
        <taxon>Pseudomonadota</taxon>
        <taxon>Alphaproteobacteria</taxon>
        <taxon>Hyphomicrobiales</taxon>
        <taxon>Brucellaceae</taxon>
        <taxon>Brucella/Ochrobactrum group</taxon>
        <taxon>Brucella</taxon>
    </lineage>
</organism>
<feature type="chain" id="PRO_0000206526" description="Inner membrane-spanning protein YciB">
    <location>
        <begin position="1"/>
        <end position="200"/>
    </location>
</feature>
<feature type="transmembrane region" description="Helical" evidence="1">
    <location>
        <begin position="1"/>
        <end position="21"/>
    </location>
</feature>
<feature type="transmembrane region" description="Helical" evidence="1">
    <location>
        <begin position="37"/>
        <end position="57"/>
    </location>
</feature>
<feature type="transmembrane region" description="Helical" evidence="1">
    <location>
        <begin position="66"/>
        <end position="86"/>
    </location>
</feature>
<feature type="transmembrane region" description="Helical" evidence="1">
    <location>
        <begin position="103"/>
        <end position="123"/>
    </location>
</feature>
<feature type="transmembrane region" description="Helical" evidence="1">
    <location>
        <begin position="136"/>
        <end position="156"/>
    </location>
</feature>
<feature type="transmembrane region" description="Helical" evidence="1">
    <location>
        <begin position="167"/>
        <end position="187"/>
    </location>
</feature>
<dbReference type="EMBL" id="AE014291">
    <property type="protein sequence ID" value="AAN30827.1"/>
    <property type="status" value="ALT_INIT"/>
    <property type="molecule type" value="Genomic_DNA"/>
</dbReference>
<dbReference type="EMBL" id="CP002997">
    <property type="protein sequence ID" value="AEM19244.1"/>
    <property type="status" value="ALT_INIT"/>
    <property type="molecule type" value="Genomic_DNA"/>
</dbReference>
<dbReference type="KEGG" id="bms:BR1935"/>
<dbReference type="KEGG" id="bsi:BS1330_I1929"/>
<dbReference type="HOGENOM" id="CLU_089554_1_1_5"/>
<dbReference type="Proteomes" id="UP000007104">
    <property type="component" value="Chromosome I"/>
</dbReference>
<dbReference type="GO" id="GO:0005886">
    <property type="term" value="C:plasma membrane"/>
    <property type="evidence" value="ECO:0007669"/>
    <property type="project" value="UniProtKB-SubCell"/>
</dbReference>
<dbReference type="HAMAP" id="MF_00189">
    <property type="entry name" value="YciB"/>
    <property type="match status" value="1"/>
</dbReference>
<dbReference type="InterPro" id="IPR006008">
    <property type="entry name" value="YciB"/>
</dbReference>
<dbReference type="NCBIfam" id="TIGR00997">
    <property type="entry name" value="ispZ"/>
    <property type="match status" value="1"/>
</dbReference>
<dbReference type="NCBIfam" id="NF001323">
    <property type="entry name" value="PRK00259.1-1"/>
    <property type="match status" value="1"/>
</dbReference>
<dbReference type="PANTHER" id="PTHR36917:SF1">
    <property type="entry name" value="INNER MEMBRANE-SPANNING PROTEIN YCIB"/>
    <property type="match status" value="1"/>
</dbReference>
<dbReference type="PANTHER" id="PTHR36917">
    <property type="entry name" value="INTRACELLULAR SEPTATION PROTEIN A-RELATED"/>
    <property type="match status" value="1"/>
</dbReference>
<dbReference type="Pfam" id="PF04279">
    <property type="entry name" value="IspA"/>
    <property type="match status" value="1"/>
</dbReference>
<comment type="function">
    <text evidence="1">Plays a role in cell envelope biogenesis, maintenance of cell envelope integrity and membrane homeostasis.</text>
</comment>
<comment type="subcellular location">
    <subcellularLocation>
        <location evidence="1">Cell inner membrane</location>
        <topology evidence="1">Multi-pass membrane protein</topology>
    </subcellularLocation>
</comment>
<comment type="similarity">
    <text evidence="1">Belongs to the YciB family.</text>
</comment>
<comment type="sequence caution" evidence="2">
    <conflict type="erroneous initiation">
        <sequence resource="EMBL-CDS" id="AAN30827"/>
    </conflict>
</comment>
<comment type="sequence caution" evidence="2">
    <conflict type="erroneous initiation">
        <sequence resource="EMBL-CDS" id="AEM19244"/>
    </conflict>
    <text>Truncated N-terminus.</text>
</comment>
<accession>P59363</accession>
<accession>G0K878</accession>
<name>YCIB_BRUSU</name>
<protein>
    <recommendedName>
        <fullName evidence="1">Inner membrane-spanning protein YciB</fullName>
    </recommendedName>
</protein>
<evidence type="ECO:0000255" key="1">
    <source>
        <dbReference type="HAMAP-Rule" id="MF_00189"/>
    </source>
</evidence>
<evidence type="ECO:0000305" key="2"/>
<reference key="1">
    <citation type="journal article" date="2002" name="Proc. Natl. Acad. Sci. U.S.A.">
        <title>The Brucella suis genome reveals fundamental similarities between animal and plant pathogens and symbionts.</title>
        <authorList>
            <person name="Paulsen I.T."/>
            <person name="Seshadri R."/>
            <person name="Nelson K.E."/>
            <person name="Eisen J.A."/>
            <person name="Heidelberg J.F."/>
            <person name="Read T.D."/>
            <person name="Dodson R.J."/>
            <person name="Umayam L.A."/>
            <person name="Brinkac L.M."/>
            <person name="Beanan M.J."/>
            <person name="Daugherty S.C."/>
            <person name="DeBoy R.T."/>
            <person name="Durkin A.S."/>
            <person name="Kolonay J.F."/>
            <person name="Madupu R."/>
            <person name="Nelson W.C."/>
            <person name="Ayodeji B."/>
            <person name="Kraul M."/>
            <person name="Shetty J."/>
            <person name="Malek J.A."/>
            <person name="Van Aken S.E."/>
            <person name="Riedmuller S."/>
            <person name="Tettelin H."/>
            <person name="Gill S.R."/>
            <person name="White O."/>
            <person name="Salzberg S.L."/>
            <person name="Hoover D.L."/>
            <person name="Lindler L.E."/>
            <person name="Halling S.M."/>
            <person name="Boyle S.M."/>
            <person name="Fraser C.M."/>
        </authorList>
    </citation>
    <scope>NUCLEOTIDE SEQUENCE [LARGE SCALE GENOMIC DNA]</scope>
    <source>
        <strain>1330</strain>
    </source>
</reference>
<reference key="2">
    <citation type="journal article" date="2011" name="J. Bacteriol.">
        <title>Revised genome sequence of Brucella suis 1330.</title>
        <authorList>
            <person name="Tae H."/>
            <person name="Shallom S."/>
            <person name="Settlage R."/>
            <person name="Preston D."/>
            <person name="Adams L.G."/>
            <person name="Garner H.R."/>
        </authorList>
    </citation>
    <scope>NUCLEOTIDE SEQUENCE [LARGE SCALE GENOMIC DNA]</scope>
    <source>
        <strain>1330</strain>
    </source>
</reference>
<proteinExistence type="inferred from homology"/>